<name>G6PI_SHEPC</name>
<sequence length="545" mass="59670">MTLLTQSSTWQALSAHTQNLPHMRELFATDAARFKNMSLSACGLFLDYSKNRATAETLELLFSLAKDSQLEAKIKAMFAGEIINTTEKRAVLHTALRSKASQSIIAEGQDIVLEVQQTLSKMQEFVETVTSGQWKGYTGKAITDIVSIGIGGSFLGPKVVSQALRPYWNQGLNCHFVANVDGTSISEKLKLLDSETTLFIMSSKSFGTQETLTNTLTAKAWFLAKGGLQSDVAKHFVAVTSNVTKATEFGIDANNIFPMWDWVGGRYSLWSAIGLPIALLVGMDNFRALLNGAHQMDEHFASAPLAENMPVIMGLLSLWYGNFFNAQSHVVLTYDHYLRGLPAYFQQLDMESNGKSVTLDGTDVDYSTGPVIWGGEGTNGQHAYHQLIHQGTALIPADFIMPLQSHNPIGVHHDQLASNCFGQTQALMQGRTFEEALAELANSSLTDEEKQLIAKHKVMPGNKPSNTLLMNKLTPETLGALIALYEHRTFVQGAIWDINSFDQWGVELGKNLGNDVLARISAEQDSSALDASSNGLINLYRQGAI</sequence>
<accession>A4Y493</accession>
<reference key="1">
    <citation type="submission" date="2007-04" db="EMBL/GenBank/DDBJ databases">
        <title>Complete sequence of Shewanella putrefaciens CN-32.</title>
        <authorList>
            <consortium name="US DOE Joint Genome Institute"/>
            <person name="Copeland A."/>
            <person name="Lucas S."/>
            <person name="Lapidus A."/>
            <person name="Barry K."/>
            <person name="Detter J.C."/>
            <person name="Glavina del Rio T."/>
            <person name="Hammon N."/>
            <person name="Israni S."/>
            <person name="Dalin E."/>
            <person name="Tice H."/>
            <person name="Pitluck S."/>
            <person name="Chain P."/>
            <person name="Malfatti S."/>
            <person name="Shin M."/>
            <person name="Vergez L."/>
            <person name="Schmutz J."/>
            <person name="Larimer F."/>
            <person name="Land M."/>
            <person name="Hauser L."/>
            <person name="Kyrpides N."/>
            <person name="Mikhailova N."/>
            <person name="Romine M.F."/>
            <person name="Fredrickson J."/>
            <person name="Tiedje J."/>
            <person name="Richardson P."/>
        </authorList>
    </citation>
    <scope>NUCLEOTIDE SEQUENCE [LARGE SCALE GENOMIC DNA]</scope>
    <source>
        <strain>CN-32 / ATCC BAA-453</strain>
    </source>
</reference>
<comment type="function">
    <text evidence="1">Catalyzes the reversible isomerization of glucose-6-phosphate to fructose-6-phosphate.</text>
</comment>
<comment type="catalytic activity">
    <reaction evidence="1">
        <text>alpha-D-glucose 6-phosphate = beta-D-fructose 6-phosphate</text>
        <dbReference type="Rhea" id="RHEA:11816"/>
        <dbReference type="ChEBI" id="CHEBI:57634"/>
        <dbReference type="ChEBI" id="CHEBI:58225"/>
        <dbReference type="EC" id="5.3.1.9"/>
    </reaction>
</comment>
<comment type="pathway">
    <text evidence="1">Carbohydrate biosynthesis; gluconeogenesis.</text>
</comment>
<comment type="pathway">
    <text evidence="1">Carbohydrate degradation; glycolysis; D-glyceraldehyde 3-phosphate and glycerone phosphate from D-glucose: step 2/4.</text>
</comment>
<comment type="subcellular location">
    <subcellularLocation>
        <location evidence="1">Cytoplasm</location>
    </subcellularLocation>
</comment>
<comment type="similarity">
    <text evidence="1">Belongs to the GPI family.</text>
</comment>
<evidence type="ECO:0000255" key="1">
    <source>
        <dbReference type="HAMAP-Rule" id="MF_00473"/>
    </source>
</evidence>
<dbReference type="EC" id="5.3.1.9" evidence="1"/>
<dbReference type="EMBL" id="CP000681">
    <property type="protein sequence ID" value="ABP74776.1"/>
    <property type="molecule type" value="Genomic_DNA"/>
</dbReference>
<dbReference type="SMR" id="A4Y493"/>
<dbReference type="STRING" id="319224.Sputcn32_1048"/>
<dbReference type="KEGG" id="spc:Sputcn32_1048"/>
<dbReference type="eggNOG" id="COG0166">
    <property type="taxonomic scope" value="Bacteria"/>
</dbReference>
<dbReference type="HOGENOM" id="CLU_017947_3_1_6"/>
<dbReference type="UniPathway" id="UPA00109">
    <property type="reaction ID" value="UER00181"/>
</dbReference>
<dbReference type="UniPathway" id="UPA00138"/>
<dbReference type="GO" id="GO:0005829">
    <property type="term" value="C:cytosol"/>
    <property type="evidence" value="ECO:0007669"/>
    <property type="project" value="TreeGrafter"/>
</dbReference>
<dbReference type="GO" id="GO:0097367">
    <property type="term" value="F:carbohydrate derivative binding"/>
    <property type="evidence" value="ECO:0007669"/>
    <property type="project" value="InterPro"/>
</dbReference>
<dbReference type="GO" id="GO:0004347">
    <property type="term" value="F:glucose-6-phosphate isomerase activity"/>
    <property type="evidence" value="ECO:0007669"/>
    <property type="project" value="UniProtKB-UniRule"/>
</dbReference>
<dbReference type="GO" id="GO:0048029">
    <property type="term" value="F:monosaccharide binding"/>
    <property type="evidence" value="ECO:0007669"/>
    <property type="project" value="TreeGrafter"/>
</dbReference>
<dbReference type="GO" id="GO:0006094">
    <property type="term" value="P:gluconeogenesis"/>
    <property type="evidence" value="ECO:0007669"/>
    <property type="project" value="UniProtKB-UniRule"/>
</dbReference>
<dbReference type="GO" id="GO:0051156">
    <property type="term" value="P:glucose 6-phosphate metabolic process"/>
    <property type="evidence" value="ECO:0007669"/>
    <property type="project" value="TreeGrafter"/>
</dbReference>
<dbReference type="GO" id="GO:0006096">
    <property type="term" value="P:glycolytic process"/>
    <property type="evidence" value="ECO:0007669"/>
    <property type="project" value="UniProtKB-UniRule"/>
</dbReference>
<dbReference type="CDD" id="cd05015">
    <property type="entry name" value="SIS_PGI_1"/>
    <property type="match status" value="1"/>
</dbReference>
<dbReference type="CDD" id="cd05016">
    <property type="entry name" value="SIS_PGI_2"/>
    <property type="match status" value="1"/>
</dbReference>
<dbReference type="FunFam" id="3.40.50.10490:FF:000018">
    <property type="entry name" value="Glucose-6-phosphate isomerase"/>
    <property type="match status" value="1"/>
</dbReference>
<dbReference type="Gene3D" id="1.10.1390.10">
    <property type="match status" value="1"/>
</dbReference>
<dbReference type="Gene3D" id="3.40.50.10490">
    <property type="entry name" value="Glucose-6-phosphate isomerase like protein, domain 1"/>
    <property type="match status" value="2"/>
</dbReference>
<dbReference type="HAMAP" id="MF_00473">
    <property type="entry name" value="G6P_isomerase"/>
    <property type="match status" value="1"/>
</dbReference>
<dbReference type="InterPro" id="IPR001672">
    <property type="entry name" value="G6P_Isomerase"/>
</dbReference>
<dbReference type="InterPro" id="IPR023096">
    <property type="entry name" value="G6P_Isomerase_C"/>
</dbReference>
<dbReference type="InterPro" id="IPR018189">
    <property type="entry name" value="Phosphoglucose_isomerase_CS"/>
</dbReference>
<dbReference type="InterPro" id="IPR046348">
    <property type="entry name" value="SIS_dom_sf"/>
</dbReference>
<dbReference type="InterPro" id="IPR035476">
    <property type="entry name" value="SIS_PGI_1"/>
</dbReference>
<dbReference type="InterPro" id="IPR035482">
    <property type="entry name" value="SIS_PGI_2"/>
</dbReference>
<dbReference type="NCBIfam" id="NF001211">
    <property type="entry name" value="PRK00179.1"/>
    <property type="match status" value="1"/>
</dbReference>
<dbReference type="PANTHER" id="PTHR11469">
    <property type="entry name" value="GLUCOSE-6-PHOSPHATE ISOMERASE"/>
    <property type="match status" value="1"/>
</dbReference>
<dbReference type="PANTHER" id="PTHR11469:SF1">
    <property type="entry name" value="GLUCOSE-6-PHOSPHATE ISOMERASE"/>
    <property type="match status" value="1"/>
</dbReference>
<dbReference type="Pfam" id="PF00342">
    <property type="entry name" value="PGI"/>
    <property type="match status" value="1"/>
</dbReference>
<dbReference type="PRINTS" id="PR00662">
    <property type="entry name" value="G6PISOMERASE"/>
</dbReference>
<dbReference type="SUPFAM" id="SSF53697">
    <property type="entry name" value="SIS domain"/>
    <property type="match status" value="1"/>
</dbReference>
<dbReference type="PROSITE" id="PS00765">
    <property type="entry name" value="P_GLUCOSE_ISOMERASE_1"/>
    <property type="match status" value="1"/>
</dbReference>
<dbReference type="PROSITE" id="PS00174">
    <property type="entry name" value="P_GLUCOSE_ISOMERASE_2"/>
    <property type="match status" value="1"/>
</dbReference>
<dbReference type="PROSITE" id="PS51463">
    <property type="entry name" value="P_GLUCOSE_ISOMERASE_3"/>
    <property type="match status" value="1"/>
</dbReference>
<proteinExistence type="inferred from homology"/>
<protein>
    <recommendedName>
        <fullName evidence="1">Glucose-6-phosphate isomerase</fullName>
        <shortName evidence="1">GPI</shortName>
        <ecNumber evidence="1">5.3.1.9</ecNumber>
    </recommendedName>
    <alternativeName>
        <fullName evidence="1">Phosphoglucose isomerase</fullName>
        <shortName evidence="1">PGI</shortName>
    </alternativeName>
    <alternativeName>
        <fullName evidence="1">Phosphohexose isomerase</fullName>
        <shortName evidence="1">PHI</shortName>
    </alternativeName>
</protein>
<feature type="chain" id="PRO_1000014016" description="Glucose-6-phosphate isomerase">
    <location>
        <begin position="1"/>
        <end position="545"/>
    </location>
</feature>
<feature type="active site" description="Proton donor" evidence="1">
    <location>
        <position position="351"/>
    </location>
</feature>
<feature type="active site" evidence="1">
    <location>
        <position position="382"/>
    </location>
</feature>
<feature type="active site" evidence="1">
    <location>
        <position position="510"/>
    </location>
</feature>
<organism>
    <name type="scientific">Shewanella putrefaciens (strain CN-32 / ATCC BAA-453)</name>
    <dbReference type="NCBI Taxonomy" id="319224"/>
    <lineage>
        <taxon>Bacteria</taxon>
        <taxon>Pseudomonadati</taxon>
        <taxon>Pseudomonadota</taxon>
        <taxon>Gammaproteobacteria</taxon>
        <taxon>Alteromonadales</taxon>
        <taxon>Shewanellaceae</taxon>
        <taxon>Shewanella</taxon>
    </lineage>
</organism>
<gene>
    <name evidence="1" type="primary">pgi</name>
    <name type="ordered locus">Sputcn32_1048</name>
</gene>
<keyword id="KW-0963">Cytoplasm</keyword>
<keyword id="KW-0312">Gluconeogenesis</keyword>
<keyword id="KW-0324">Glycolysis</keyword>
<keyword id="KW-0413">Isomerase</keyword>